<feature type="signal peptide" evidence="1">
    <location>
        <begin position="1"/>
        <end position="21"/>
    </location>
</feature>
<feature type="chain" id="PRO_5012903889" description="Pigment dispersing factor homolog pdf-1" evidence="1">
    <location>
        <begin position="22"/>
        <end position="88"/>
    </location>
</feature>
<feature type="splice variant" id="VSP_061252" description="In isoform b.">
    <location>
        <begin position="30"/>
        <end position="31"/>
    </location>
</feature>
<organism evidence="14">
    <name type="scientific">Caenorhabditis elegans</name>
    <dbReference type="NCBI Taxonomy" id="6239"/>
    <lineage>
        <taxon>Eukaryota</taxon>
        <taxon>Metazoa</taxon>
        <taxon>Ecdysozoa</taxon>
        <taxon>Nematoda</taxon>
        <taxon>Chromadorea</taxon>
        <taxon>Rhabditida</taxon>
        <taxon>Rhabditina</taxon>
        <taxon>Rhabditomorpha</taxon>
        <taxon>Rhabditoidea</taxon>
        <taxon>Rhabditidae</taxon>
        <taxon>Peloderinae</taxon>
        <taxon>Caenorhabditis</taxon>
    </lineage>
</organism>
<dbReference type="EMBL" id="EF141319">
    <property type="protein sequence ID" value="ABO42258.1"/>
    <property type="status" value="ALT_INIT"/>
    <property type="molecule type" value="mRNA"/>
</dbReference>
<dbReference type="EMBL" id="EF141320">
    <property type="protein sequence ID" value="ABO42259.1"/>
    <property type="status" value="ALT_INIT"/>
    <property type="molecule type" value="mRNA"/>
</dbReference>
<dbReference type="EMBL" id="BX284603">
    <property type="protein sequence ID" value="CCD72026.2"/>
    <property type="molecule type" value="Genomic_DNA"/>
</dbReference>
<dbReference type="EMBL" id="BX284603">
    <property type="protein sequence ID" value="CCD72027.2"/>
    <property type="molecule type" value="Genomic_DNA"/>
</dbReference>
<dbReference type="RefSeq" id="NP_001379990.1">
    <molecule id="G8JYC6-2"/>
    <property type="nucleotide sequence ID" value="NM_001392134.1"/>
</dbReference>
<dbReference type="RefSeq" id="NP_741205.1">
    <property type="nucleotide sequence ID" value="NM_171177.3"/>
</dbReference>
<dbReference type="RefSeq" id="NP_741206.2">
    <molecule id="G8JYC6-1"/>
    <property type="nucleotide sequence ID" value="NM_171878.7"/>
</dbReference>
<dbReference type="FunCoup" id="G8JYC6">
    <property type="interactions" value="342"/>
</dbReference>
<dbReference type="STRING" id="6239.T07E3.6a.2"/>
<dbReference type="PaxDb" id="6239-T07E3.6a"/>
<dbReference type="EnsemblMetazoa" id="T07E3.6a.1">
    <molecule id="G8JYC6-1"/>
    <property type="protein sequence ID" value="T07E3.6a.1"/>
    <property type="gene ID" value="WBGene00020317"/>
</dbReference>
<dbReference type="EnsemblMetazoa" id="T07E3.6a.2">
    <molecule id="G8JYC6-1"/>
    <property type="protein sequence ID" value="T07E3.6a.2"/>
    <property type="gene ID" value="WBGene00020317"/>
</dbReference>
<dbReference type="EnsemblMetazoa" id="T07E3.6b.1">
    <molecule id="G8JYC6-2"/>
    <property type="protein sequence ID" value="T07E3.6b.1"/>
    <property type="gene ID" value="WBGene00020317"/>
</dbReference>
<dbReference type="GeneID" id="175963"/>
<dbReference type="KEGG" id="cel:CELE_T07E3.6"/>
<dbReference type="AGR" id="WB:WBGene00020317"/>
<dbReference type="CTD" id="175963"/>
<dbReference type="WormBase" id="T07E3.6a">
    <molecule id="G8JYC6-1"/>
    <property type="protein sequence ID" value="CE52388"/>
    <property type="gene ID" value="WBGene00020317"/>
    <property type="gene designation" value="pdf-1"/>
</dbReference>
<dbReference type="WormBase" id="T07E3.6b">
    <molecule id="G8JYC6-2"/>
    <property type="protein sequence ID" value="CE52158"/>
    <property type="gene ID" value="WBGene00020317"/>
    <property type="gene designation" value="pdf-1"/>
</dbReference>
<dbReference type="eggNOG" id="ENOG502SEYH">
    <property type="taxonomic scope" value="Eukaryota"/>
</dbReference>
<dbReference type="HOGENOM" id="CLU_1497564_0_0_1"/>
<dbReference type="InParanoid" id="G8JYC6"/>
<dbReference type="OrthoDB" id="5837168at2759"/>
<dbReference type="PRO" id="PR:G8JYC6"/>
<dbReference type="Proteomes" id="UP000001940">
    <property type="component" value="Chromosome III"/>
</dbReference>
<dbReference type="Bgee" id="WBGene00020317">
    <property type="expression patterns" value="Expressed in larva and 3 other cell types or tissues"/>
</dbReference>
<dbReference type="ExpressionAtlas" id="G8JYC6">
    <property type="expression patterns" value="baseline and differential"/>
</dbReference>
<dbReference type="GO" id="GO:0005576">
    <property type="term" value="C:extracellular region"/>
    <property type="evidence" value="ECO:0007669"/>
    <property type="project" value="UniProtKB-SubCell"/>
</dbReference>
<dbReference type="GO" id="GO:0007189">
    <property type="term" value="P:adenylate cyclase-activating G protein-coupled receptor signaling pathway"/>
    <property type="evidence" value="ECO:0000315"/>
    <property type="project" value="UniProtKB"/>
</dbReference>
<dbReference type="GO" id="GO:0007188">
    <property type="term" value="P:adenylate cyclase-modulating G protein-coupled receptor signaling pathway"/>
    <property type="evidence" value="ECO:0000315"/>
    <property type="project" value="UniProtKB"/>
</dbReference>
<dbReference type="GO" id="GO:0040011">
    <property type="term" value="P:locomotion"/>
    <property type="evidence" value="ECO:0000315"/>
    <property type="project" value="UniProtKB"/>
</dbReference>
<dbReference type="GO" id="GO:0031987">
    <property type="term" value="P:locomotion involved in locomotory behavior"/>
    <property type="evidence" value="ECO:0000315"/>
    <property type="project" value="UniProtKB"/>
</dbReference>
<dbReference type="GO" id="GO:0045475">
    <property type="term" value="P:locomotor rhythm"/>
    <property type="evidence" value="ECO:0000315"/>
    <property type="project" value="UniProtKB"/>
</dbReference>
<dbReference type="GO" id="GO:0035641">
    <property type="term" value="P:locomotory exploration behavior"/>
    <property type="evidence" value="ECO:0000315"/>
    <property type="project" value="UniProtKB"/>
</dbReference>
<dbReference type="GO" id="GO:0060179">
    <property type="term" value="P:male mating behavior"/>
    <property type="evidence" value="ECO:0000315"/>
    <property type="project" value="UniProtKB"/>
</dbReference>
<dbReference type="GO" id="GO:0007567">
    <property type="term" value="P:parturition"/>
    <property type="evidence" value="ECO:0000315"/>
    <property type="project" value="UniProtKB"/>
</dbReference>
<dbReference type="GO" id="GO:0010628">
    <property type="term" value="P:positive regulation of gene expression"/>
    <property type="evidence" value="ECO:0000315"/>
    <property type="project" value="UniProtKB"/>
</dbReference>
<dbReference type="GO" id="GO:0050714">
    <property type="term" value="P:positive regulation of protein secretion"/>
    <property type="evidence" value="ECO:0000316"/>
    <property type="project" value="UniProtKB"/>
</dbReference>
<dbReference type="GO" id="GO:0030431">
    <property type="term" value="P:sleep"/>
    <property type="evidence" value="ECO:0000315"/>
    <property type="project" value="UniProtKB"/>
</dbReference>
<reference evidence="12 13" key="1">
    <citation type="journal article" date="2009" name="J. Neurochem.">
        <title>Discovery and characterization of a conserved pigment dispersing factor-like neuropeptide pathway in Caenorhabditis elegans.</title>
        <authorList>
            <person name="Janssen T."/>
            <person name="Husson S.J."/>
            <person name="Meelkop E."/>
            <person name="Temmerman L."/>
            <person name="Lindemans M."/>
            <person name="Verstraelen K."/>
            <person name="Rademakers S."/>
            <person name="Mertens I."/>
            <person name="Nitabach M."/>
            <person name="Jansen G."/>
            <person name="Schoofs L."/>
        </authorList>
    </citation>
    <scope>NUCLEOTIDE SEQUENCE [MRNA]</scope>
    <scope>DEVELOPMENTAL STAGE</scope>
</reference>
<reference evidence="14" key="2">
    <citation type="journal article" date="1998" name="Science">
        <title>Genome sequence of the nematode C. elegans: a platform for investigating biology.</title>
        <authorList>
            <consortium name="The C. elegans sequencing consortium"/>
        </authorList>
    </citation>
    <scope>NUCLEOTIDE SEQUENCE [LARGE SCALE GENOMIC DNA]</scope>
    <source>
        <strain evidence="14">Bristol N2</strain>
    </source>
</reference>
<reference evidence="11" key="3">
    <citation type="journal article" date="2008" name="J. Biol. Chem.">
        <title>Functional characterization of three G protein-coupled receptors for pigment dispersing factors in Caenorhabditis elegans.</title>
        <authorList>
            <person name="Janssen T."/>
            <person name="Husson S.J."/>
            <person name="Lindemans M."/>
            <person name="Mertens I."/>
            <person name="Rademakers S."/>
            <person name="Donck K.V."/>
            <person name="Geysen J."/>
            <person name="Jansen G."/>
            <person name="Schoofs L."/>
        </authorList>
    </citation>
    <scope>FUNCTION</scope>
</reference>
<reference evidence="11" key="4">
    <citation type="journal article" date="2012" name="Mol. Cell. Endocrinol.">
        <title>PDF receptor signaling in Caenorhabditis elegans modulates locomotion and egg-laying.</title>
        <authorList>
            <person name="Meelkop E."/>
            <person name="Temmerman L."/>
            <person name="Janssen T."/>
            <person name="Suetens N."/>
            <person name="Beets I."/>
            <person name="Van Rompay L."/>
            <person name="Shanmugam N."/>
            <person name="Husson S.J."/>
            <person name="Schoofs L."/>
        </authorList>
    </citation>
    <scope>FUNCTION</scope>
</reference>
<reference evidence="11" key="5">
    <citation type="journal article" date="2012" name="Nat. Neurosci.">
        <title>PDF-1 neuropeptide signaling modulates a neural circuit for mate-searching behavior in C. elegans.</title>
        <authorList>
            <person name="Barrios A."/>
            <person name="Ghosh R."/>
            <person name="Fang C."/>
            <person name="Emmons S.W."/>
            <person name="Barr M.M."/>
        </authorList>
    </citation>
    <scope>FUNCTION</scope>
    <scope>DEVELOPMENTAL STAGE</scope>
</reference>
<reference key="6">
    <citation type="journal article" date="2013" name="Cell">
        <title>Serotonin and the neuropeptide PDF initiate and extend opposing behavioral states in C. elegans.</title>
        <authorList>
            <person name="Flavell S.W."/>
            <person name="Pokala N."/>
            <person name="Macosko E.Z."/>
            <person name="Albrecht D.R."/>
            <person name="Larsch J."/>
            <person name="Bargmann C.I."/>
        </authorList>
    </citation>
    <scope>FUNCTION</scope>
    <scope>DEVELOPMENTAL STAGE</scope>
    <scope>DISRUPTION PHENOTYPE</scope>
</reference>
<reference evidence="11" key="7">
    <citation type="journal article" date="2013" name="Neuron">
        <title>Analysis of NPR-1 reveals a circuit mechanism for behavioral quiescence in C. elegans.</title>
        <authorList>
            <person name="Choi S."/>
            <person name="Chatzigeorgiou M."/>
            <person name="Taylor K.P."/>
            <person name="Schafer W.R."/>
            <person name="Kaplan J.M."/>
        </authorList>
    </citation>
    <scope>FUNCTION</scope>
    <scope>DEVELOPMENTAL STAGE</scope>
</reference>
<reference evidence="11" key="8">
    <citation type="journal article" date="2015" name="Genes Brain Behav.">
        <title>Pigment-dispersing factor signaling in the circadian system of Caenorhabditis elegans.</title>
        <authorList>
            <person name="Herrero A."/>
            <person name="Romanowski A."/>
            <person name="Meelkop E."/>
            <person name="Caldart C.S."/>
            <person name="Schoofs L."/>
            <person name="Golombek D.A."/>
        </authorList>
    </citation>
    <scope>FUNCTION</scope>
</reference>
<reference evidence="11" key="9">
    <citation type="journal article" date="2016" name="Genetics">
        <title>The Neuropeptides FLP-2 and PDF-1 Act in Concert To Arouse Caenorhabditis elegans Locomotion.</title>
        <authorList>
            <person name="Chen D."/>
            <person name="Taylor K.P."/>
            <person name="Hall Q."/>
            <person name="Kaplan J.M."/>
        </authorList>
    </citation>
    <scope>FUNCTION</scope>
</reference>
<reference evidence="11" key="10">
    <citation type="journal article" date="2018" name="Elife">
        <title>PDF-1 neuropeptide signaling regulates sexually dimorphic gene expression in shared sensory neurons of C. elegans.</title>
        <authorList>
            <person name="Hilbert Z.A."/>
            <person name="Kim D.H."/>
        </authorList>
    </citation>
    <scope>FUNCTION</scope>
</reference>
<name>PDF1_CAEEL</name>
<keyword id="KW-0025">Alternative splicing</keyword>
<keyword id="KW-1185">Reference proteome</keyword>
<keyword id="KW-0964">Secreted</keyword>
<keyword id="KW-0732">Signal</keyword>
<accession>G8JYC6</accession>
<accession>B2BBX9</accession>
<accession>G5EEV3</accession>
<accession>Q8WQD1</accession>
<evidence type="ECO:0000255" key="1"/>
<evidence type="ECO:0000269" key="2">
    <source>
    </source>
</evidence>
<evidence type="ECO:0000269" key="3">
    <source>
    </source>
</evidence>
<evidence type="ECO:0000269" key="4">
    <source>
    </source>
</evidence>
<evidence type="ECO:0000269" key="5">
    <source>
    </source>
</evidence>
<evidence type="ECO:0000269" key="6">
    <source>
    </source>
</evidence>
<evidence type="ECO:0000269" key="7">
    <source>
    </source>
</evidence>
<evidence type="ECO:0000269" key="8">
    <source>
    </source>
</evidence>
<evidence type="ECO:0000269" key="9">
    <source>
    </source>
</evidence>
<evidence type="ECO:0000269" key="10">
    <source>
    </source>
</evidence>
<evidence type="ECO:0000305" key="11"/>
<evidence type="ECO:0000312" key="12">
    <source>
        <dbReference type="EMBL" id="ABO42258.1"/>
    </source>
</evidence>
<evidence type="ECO:0000312" key="13">
    <source>
        <dbReference type="EMBL" id="ABO42259.1"/>
    </source>
</evidence>
<evidence type="ECO:0000312" key="14">
    <source>
        <dbReference type="Proteomes" id="UP000001940"/>
    </source>
</evidence>
<evidence type="ECO:0000312" key="15">
    <source>
        <dbReference type="WormBase" id="T07E3.6a"/>
    </source>
</evidence>
<evidence type="ECO:0000312" key="16">
    <source>
        <dbReference type="WormBase" id="T07E3.6b"/>
    </source>
</evidence>
<gene>
    <name evidence="15" type="primary">pdf-1</name>
    <name evidence="15" type="ORF">T07E3.6</name>
</gene>
<proteinExistence type="evidence at transcript level"/>
<sequence length="88" mass="9621">MNRFIISMIALLAVFCAVSTASPLLYRAPQYQMYDDVQFVKRSNAELINGLIGMDLGKLSAVGKRSNAELINGLLSMNLNKLSGAGRR</sequence>
<comment type="function">
    <text evidence="2 4 5 6 7 8 9 10">Probable ligand of isoforms a and b of the calcitonin receptor-like protein, pdfr-1, a G-protein coupled receptor (PubMed:18390545). May not signal through isoform c of pdfr-1 (PubMed:18390545). Involved in locomotion; more specifically mate searching behavior of males, independent of nutritional status (PubMed:18390545, PubMed:22579613, PubMed:23143519, PubMed:30024377). Involved in regulating the male-specific expression of TGFbeta-like daf-7 in the ASJ chemosensory neurons (PubMed:30024377). Plays a role in circadian rhythms of locomotor activity (PubMed:26113231). Involved in mediating arousal from the sleep-like state called lethargus, which occurs during molting between larval and adult stages, in part by regulating touch sensitivity, and working in concert with neuropeptide flp-2 (PubMed:23764289, PubMed:27585848). In the presence of food, plays a role in initiating and extending exploratory roaming behavior, in opposition to 5-hydroxytryptamine (serotonin) signaling.</text>
</comment>
<comment type="subcellular location">
    <subcellularLocation>
        <location evidence="11">Secreted</location>
    </subcellularLocation>
</comment>
<comment type="alternative products">
    <event type="alternative splicing"/>
    <isoform>
        <id>G8JYC6-1</id>
        <name evidence="15">a</name>
        <sequence type="displayed"/>
    </isoform>
    <isoform>
        <id>G8JYC6-2</id>
        <name evidence="16">b</name>
        <sequence type="described" ref="VSP_061252"/>
    </isoform>
</comment>
<comment type="developmental stage">
    <text evidence="3 5 6">Expressed throughout postembryonic life (PubMed:19686386). Expressed in hermaphrodites in the interneurons ADAL/R and PVT, the chemosensory neuron pairs ASI, ASK, PHA and PHB, the RMED, RMEV and RID motor neurons, the sensory neuron pair ADE, the PQR mechanosensory neuron and in the PVPL/R interneurons (PubMed:19686386, PubMed:23764289). Also expressed in rectal gland cells rectD and rectVL/R, and the intestino-rectal valve cells virL/R (PubMed:19686386). Expressed in both sexes in the head interneurons SAAV, SAAD, SIAV, AVB, AIM, RMG, and in the tail in the interneurons PVN, LUA, PVT, and the pair PVS and PVU (referred to as PVP left and right in the hermaphrodite) (PubMed:23143519, PubMed:23764289, PubMed:23972393). Expressed in male-specific ventral cord neurons CP7 and CP8, and PDC (PubMed:23143519). Expression from the AIM interneurons in males is involved in mate searching behavior (PubMed:23143519).</text>
</comment>
<comment type="disruption phenotype">
    <text evidence="7">Conditional knockdown in AVB, PVP, and SIAV neurons reduces exploratory roaming behavior.</text>
</comment>
<comment type="sequence caution" evidence="11">
    <conflict type="erroneous initiation">
        <sequence resource="EMBL-CDS" id="ABO42258"/>
    </conflict>
    <text>Extended N-terminus.</text>
</comment>
<comment type="sequence caution" evidence="11">
    <conflict type="erroneous initiation">
        <sequence resource="EMBL-CDS" id="ABO42259"/>
    </conflict>
    <text>Extended N-terminus.</text>
</comment>
<protein>
    <recommendedName>
        <fullName evidence="11">Pigment dispersing factor homolog pdf-1</fullName>
    </recommendedName>
</protein>